<sequence>MMAKVESQTGDLNEKLIAVNRVAKVVKGGRIFSFTALTVVGDGNGRVGFGYGKAREVPAAIQKAMEKARRNIRDVQLKGNTLQHPIKGRHSGSKVYMQPASEGTGIIAGGAMRAVLEVVGVQNVLSKAYGSTNPINVVRATLDALENMNSPEQIAAKRGLSVNELLG</sequence>
<comment type="function">
    <text evidence="1">With S4 and S12 plays an important role in translational accuracy.</text>
</comment>
<comment type="function">
    <text evidence="1">Located at the back of the 30S subunit body where it stabilizes the conformation of the head with respect to the body.</text>
</comment>
<comment type="subunit">
    <text evidence="1">Part of the 30S ribosomal subunit. Contacts proteins S4 and S8.</text>
</comment>
<comment type="domain">
    <text>The N-terminal domain interacts with the head of the 30S subunit; the C-terminal domain interacts with the body and contacts protein S4. The interaction surface between S4 and S5 is involved in control of translational fidelity.</text>
</comment>
<comment type="similarity">
    <text evidence="1">Belongs to the universal ribosomal protein uS5 family.</text>
</comment>
<reference key="1">
    <citation type="journal article" date="2008" name="BMC Genomics">
        <title>Genomics of an extreme psychrophile, Psychromonas ingrahamii.</title>
        <authorList>
            <person name="Riley M."/>
            <person name="Staley J.T."/>
            <person name="Danchin A."/>
            <person name="Wang T.Z."/>
            <person name="Brettin T.S."/>
            <person name="Hauser L.J."/>
            <person name="Land M.L."/>
            <person name="Thompson L.S."/>
        </authorList>
    </citation>
    <scope>NUCLEOTIDE SEQUENCE [LARGE SCALE GENOMIC DNA]</scope>
    <source>
        <strain>DSM 17664 / CCUG 51855 / 37</strain>
    </source>
</reference>
<keyword id="KW-1185">Reference proteome</keyword>
<keyword id="KW-0687">Ribonucleoprotein</keyword>
<keyword id="KW-0689">Ribosomal protein</keyword>
<keyword id="KW-0694">RNA-binding</keyword>
<keyword id="KW-0699">rRNA-binding</keyword>
<accession>A1T0C5</accession>
<proteinExistence type="inferred from homology"/>
<evidence type="ECO:0000255" key="1">
    <source>
        <dbReference type="HAMAP-Rule" id="MF_01307"/>
    </source>
</evidence>
<evidence type="ECO:0000305" key="2"/>
<protein>
    <recommendedName>
        <fullName evidence="1">Small ribosomal subunit protein uS5</fullName>
    </recommendedName>
    <alternativeName>
        <fullName evidence="2">30S ribosomal protein S5</fullName>
    </alternativeName>
</protein>
<feature type="chain" id="PRO_0000323177" description="Small ribosomal subunit protein uS5">
    <location>
        <begin position="1"/>
        <end position="167"/>
    </location>
</feature>
<feature type="domain" description="S5 DRBM" evidence="1">
    <location>
        <begin position="12"/>
        <end position="75"/>
    </location>
</feature>
<gene>
    <name evidence="1" type="primary">rpsE</name>
    <name type="ordered locus">Ping_3507</name>
</gene>
<dbReference type="EMBL" id="CP000510">
    <property type="protein sequence ID" value="ABM05190.1"/>
    <property type="molecule type" value="Genomic_DNA"/>
</dbReference>
<dbReference type="SMR" id="A1T0C5"/>
<dbReference type="STRING" id="357804.Ping_3507"/>
<dbReference type="KEGG" id="pin:Ping_3507"/>
<dbReference type="eggNOG" id="COG0098">
    <property type="taxonomic scope" value="Bacteria"/>
</dbReference>
<dbReference type="HOGENOM" id="CLU_065898_2_2_6"/>
<dbReference type="Proteomes" id="UP000000639">
    <property type="component" value="Chromosome"/>
</dbReference>
<dbReference type="GO" id="GO:0015935">
    <property type="term" value="C:small ribosomal subunit"/>
    <property type="evidence" value="ECO:0007669"/>
    <property type="project" value="InterPro"/>
</dbReference>
<dbReference type="GO" id="GO:0019843">
    <property type="term" value="F:rRNA binding"/>
    <property type="evidence" value="ECO:0007669"/>
    <property type="project" value="UniProtKB-UniRule"/>
</dbReference>
<dbReference type="GO" id="GO:0003735">
    <property type="term" value="F:structural constituent of ribosome"/>
    <property type="evidence" value="ECO:0007669"/>
    <property type="project" value="InterPro"/>
</dbReference>
<dbReference type="GO" id="GO:0006412">
    <property type="term" value="P:translation"/>
    <property type="evidence" value="ECO:0007669"/>
    <property type="project" value="UniProtKB-UniRule"/>
</dbReference>
<dbReference type="FunFam" id="3.30.160.20:FF:000001">
    <property type="entry name" value="30S ribosomal protein S5"/>
    <property type="match status" value="1"/>
</dbReference>
<dbReference type="FunFam" id="3.30.230.10:FF:000002">
    <property type="entry name" value="30S ribosomal protein S5"/>
    <property type="match status" value="1"/>
</dbReference>
<dbReference type="Gene3D" id="3.30.160.20">
    <property type="match status" value="1"/>
</dbReference>
<dbReference type="Gene3D" id="3.30.230.10">
    <property type="match status" value="1"/>
</dbReference>
<dbReference type="HAMAP" id="MF_01307_B">
    <property type="entry name" value="Ribosomal_uS5_B"/>
    <property type="match status" value="1"/>
</dbReference>
<dbReference type="InterPro" id="IPR020568">
    <property type="entry name" value="Ribosomal_Su5_D2-typ_SF"/>
</dbReference>
<dbReference type="InterPro" id="IPR000851">
    <property type="entry name" value="Ribosomal_uS5"/>
</dbReference>
<dbReference type="InterPro" id="IPR005712">
    <property type="entry name" value="Ribosomal_uS5_bac-type"/>
</dbReference>
<dbReference type="InterPro" id="IPR005324">
    <property type="entry name" value="Ribosomal_uS5_C"/>
</dbReference>
<dbReference type="InterPro" id="IPR013810">
    <property type="entry name" value="Ribosomal_uS5_N"/>
</dbReference>
<dbReference type="InterPro" id="IPR018192">
    <property type="entry name" value="Ribosomal_uS5_N_CS"/>
</dbReference>
<dbReference type="InterPro" id="IPR014721">
    <property type="entry name" value="Ribsml_uS5_D2-typ_fold_subgr"/>
</dbReference>
<dbReference type="NCBIfam" id="TIGR01021">
    <property type="entry name" value="rpsE_bact"/>
    <property type="match status" value="1"/>
</dbReference>
<dbReference type="PANTHER" id="PTHR48277">
    <property type="entry name" value="MITOCHONDRIAL RIBOSOMAL PROTEIN S5"/>
    <property type="match status" value="1"/>
</dbReference>
<dbReference type="PANTHER" id="PTHR48277:SF1">
    <property type="entry name" value="MITOCHONDRIAL RIBOSOMAL PROTEIN S5"/>
    <property type="match status" value="1"/>
</dbReference>
<dbReference type="Pfam" id="PF00333">
    <property type="entry name" value="Ribosomal_S5"/>
    <property type="match status" value="1"/>
</dbReference>
<dbReference type="Pfam" id="PF03719">
    <property type="entry name" value="Ribosomal_S5_C"/>
    <property type="match status" value="1"/>
</dbReference>
<dbReference type="SUPFAM" id="SSF54768">
    <property type="entry name" value="dsRNA-binding domain-like"/>
    <property type="match status" value="1"/>
</dbReference>
<dbReference type="SUPFAM" id="SSF54211">
    <property type="entry name" value="Ribosomal protein S5 domain 2-like"/>
    <property type="match status" value="1"/>
</dbReference>
<dbReference type="PROSITE" id="PS00585">
    <property type="entry name" value="RIBOSOMAL_S5"/>
    <property type="match status" value="1"/>
</dbReference>
<dbReference type="PROSITE" id="PS50881">
    <property type="entry name" value="S5_DSRBD"/>
    <property type="match status" value="1"/>
</dbReference>
<organism>
    <name type="scientific">Psychromonas ingrahamii (strain DSM 17664 / CCUG 51855 / 37)</name>
    <dbReference type="NCBI Taxonomy" id="357804"/>
    <lineage>
        <taxon>Bacteria</taxon>
        <taxon>Pseudomonadati</taxon>
        <taxon>Pseudomonadota</taxon>
        <taxon>Gammaproteobacteria</taxon>
        <taxon>Alteromonadales</taxon>
        <taxon>Psychromonadaceae</taxon>
        <taxon>Psychromonas</taxon>
    </lineage>
</organism>
<name>RS5_PSYIN</name>